<comment type="function">
    <text evidence="1">Forms part of the ribosomal stalk which helps the ribosome interact with GTP-bound translation factors. Is thus essential for accurate translation.</text>
</comment>
<comment type="subunit">
    <text evidence="1">Homodimer. Part of the ribosomal stalk of the 50S ribosomal subunit. Forms a multimeric L10(L12)X complex, where L10 forms an elongated spine to which 2 to 4 L12 dimers bind in a sequential fashion. Binds GTP-bound translation factors.</text>
</comment>
<comment type="similarity">
    <text evidence="1">Belongs to the bacterial ribosomal protein bL12 family.</text>
</comment>
<evidence type="ECO:0000255" key="1">
    <source>
        <dbReference type="HAMAP-Rule" id="MF_00368"/>
    </source>
</evidence>
<evidence type="ECO:0000305" key="2"/>
<name>RL7_METPB</name>
<dbReference type="EMBL" id="CP001029">
    <property type="protein sequence ID" value="ACB82597.1"/>
    <property type="molecule type" value="Genomic_DNA"/>
</dbReference>
<dbReference type="RefSeq" id="WP_012456201.1">
    <property type="nucleotide sequence ID" value="NC_010725.1"/>
</dbReference>
<dbReference type="SMR" id="B1ZGR9"/>
<dbReference type="STRING" id="441620.Mpop_4498"/>
<dbReference type="KEGG" id="mpo:Mpop_4498"/>
<dbReference type="eggNOG" id="COG0222">
    <property type="taxonomic scope" value="Bacteria"/>
</dbReference>
<dbReference type="HOGENOM" id="CLU_086499_3_0_5"/>
<dbReference type="OrthoDB" id="9811748at2"/>
<dbReference type="Proteomes" id="UP000007136">
    <property type="component" value="Chromosome"/>
</dbReference>
<dbReference type="GO" id="GO:0022625">
    <property type="term" value="C:cytosolic large ribosomal subunit"/>
    <property type="evidence" value="ECO:0007669"/>
    <property type="project" value="TreeGrafter"/>
</dbReference>
<dbReference type="GO" id="GO:0003729">
    <property type="term" value="F:mRNA binding"/>
    <property type="evidence" value="ECO:0007669"/>
    <property type="project" value="TreeGrafter"/>
</dbReference>
<dbReference type="GO" id="GO:0003735">
    <property type="term" value="F:structural constituent of ribosome"/>
    <property type="evidence" value="ECO:0007669"/>
    <property type="project" value="InterPro"/>
</dbReference>
<dbReference type="GO" id="GO:0006412">
    <property type="term" value="P:translation"/>
    <property type="evidence" value="ECO:0007669"/>
    <property type="project" value="UniProtKB-UniRule"/>
</dbReference>
<dbReference type="CDD" id="cd00387">
    <property type="entry name" value="Ribosomal_L7_L12"/>
    <property type="match status" value="1"/>
</dbReference>
<dbReference type="FunFam" id="1.20.5.710:FF:000007">
    <property type="entry name" value="50S ribosomal protein L7/L12"/>
    <property type="match status" value="1"/>
</dbReference>
<dbReference type="FunFam" id="3.30.1390.10:FF:000001">
    <property type="entry name" value="50S ribosomal protein L7/L12"/>
    <property type="match status" value="1"/>
</dbReference>
<dbReference type="Gene3D" id="3.30.1390.10">
    <property type="match status" value="1"/>
</dbReference>
<dbReference type="Gene3D" id="1.20.5.710">
    <property type="entry name" value="Single helix bin"/>
    <property type="match status" value="1"/>
</dbReference>
<dbReference type="HAMAP" id="MF_00368">
    <property type="entry name" value="Ribosomal_bL12"/>
    <property type="match status" value="1"/>
</dbReference>
<dbReference type="InterPro" id="IPR000206">
    <property type="entry name" value="Ribosomal_bL12"/>
</dbReference>
<dbReference type="InterPro" id="IPR013823">
    <property type="entry name" value="Ribosomal_bL12_C"/>
</dbReference>
<dbReference type="InterPro" id="IPR014719">
    <property type="entry name" value="Ribosomal_bL12_C/ClpS-like"/>
</dbReference>
<dbReference type="InterPro" id="IPR008932">
    <property type="entry name" value="Ribosomal_bL12_oligo"/>
</dbReference>
<dbReference type="InterPro" id="IPR036235">
    <property type="entry name" value="Ribosomal_bL12_oligo_N_sf"/>
</dbReference>
<dbReference type="NCBIfam" id="TIGR00855">
    <property type="entry name" value="L12"/>
    <property type="match status" value="1"/>
</dbReference>
<dbReference type="PANTHER" id="PTHR45987">
    <property type="entry name" value="39S RIBOSOMAL PROTEIN L12"/>
    <property type="match status" value="1"/>
</dbReference>
<dbReference type="PANTHER" id="PTHR45987:SF4">
    <property type="entry name" value="LARGE RIBOSOMAL SUBUNIT PROTEIN BL12M"/>
    <property type="match status" value="1"/>
</dbReference>
<dbReference type="Pfam" id="PF00542">
    <property type="entry name" value="Ribosomal_L12"/>
    <property type="match status" value="1"/>
</dbReference>
<dbReference type="Pfam" id="PF16320">
    <property type="entry name" value="Ribosomal_L12_N"/>
    <property type="match status" value="1"/>
</dbReference>
<dbReference type="SUPFAM" id="SSF54736">
    <property type="entry name" value="ClpS-like"/>
    <property type="match status" value="1"/>
</dbReference>
<dbReference type="SUPFAM" id="SSF48300">
    <property type="entry name" value="Ribosomal protein L7/12, oligomerisation (N-terminal) domain"/>
    <property type="match status" value="1"/>
</dbReference>
<keyword id="KW-0687">Ribonucleoprotein</keyword>
<keyword id="KW-0689">Ribosomal protein</keyword>
<organism>
    <name type="scientific">Methylorubrum populi (strain ATCC BAA-705 / NCIMB 13946 / BJ001)</name>
    <name type="common">Methylobacterium populi</name>
    <dbReference type="NCBI Taxonomy" id="441620"/>
    <lineage>
        <taxon>Bacteria</taxon>
        <taxon>Pseudomonadati</taxon>
        <taxon>Pseudomonadota</taxon>
        <taxon>Alphaproteobacteria</taxon>
        <taxon>Hyphomicrobiales</taxon>
        <taxon>Methylobacteriaceae</taxon>
        <taxon>Methylorubrum</taxon>
    </lineage>
</organism>
<accession>B1ZGR9</accession>
<protein>
    <recommendedName>
        <fullName evidence="1">Large ribosomal subunit protein bL12</fullName>
    </recommendedName>
    <alternativeName>
        <fullName evidence="2">50S ribosomal protein L7/L12</fullName>
    </alternativeName>
</protein>
<sequence>MADLAKIVEDLSSLTVLEAAELAKLLEEKWGVSAAAAVAVAAGPAGGGAAAPAAEEQTEFTVVLASAGDKKIEVIKEVRAITGLGLKEAKDLVEGAPKPVKESVAKDEAEKLKAQLEKAGAKVELK</sequence>
<reference key="1">
    <citation type="submission" date="2008-04" db="EMBL/GenBank/DDBJ databases">
        <title>Complete sequence of chromosome of Methylobacterium populi BJ001.</title>
        <authorList>
            <consortium name="US DOE Joint Genome Institute"/>
            <person name="Copeland A."/>
            <person name="Lucas S."/>
            <person name="Lapidus A."/>
            <person name="Glavina del Rio T."/>
            <person name="Dalin E."/>
            <person name="Tice H."/>
            <person name="Bruce D."/>
            <person name="Goodwin L."/>
            <person name="Pitluck S."/>
            <person name="Chertkov O."/>
            <person name="Brettin T."/>
            <person name="Detter J.C."/>
            <person name="Han C."/>
            <person name="Kuske C.R."/>
            <person name="Schmutz J."/>
            <person name="Larimer F."/>
            <person name="Land M."/>
            <person name="Hauser L."/>
            <person name="Kyrpides N."/>
            <person name="Mikhailova N."/>
            <person name="Marx C."/>
            <person name="Richardson P."/>
        </authorList>
    </citation>
    <scope>NUCLEOTIDE SEQUENCE [LARGE SCALE GENOMIC DNA]</scope>
    <source>
        <strain>ATCC BAA-705 / NCIMB 13946 / BJ001</strain>
    </source>
</reference>
<feature type="chain" id="PRO_1000121458" description="Large ribosomal subunit protein bL12">
    <location>
        <begin position="1"/>
        <end position="126"/>
    </location>
</feature>
<proteinExistence type="inferred from homology"/>
<gene>
    <name evidence="1" type="primary">rplL</name>
    <name type="ordered locus">Mpop_4498</name>
</gene>